<name>RNAS1_LEOED</name>
<evidence type="ECO:0000250" key="1"/>
<evidence type="ECO:0000255" key="2"/>
<evidence type="ECO:0000305" key="3"/>
<proteinExistence type="evidence at transcript level"/>
<protein>
    <recommendedName>
        <fullName>Ribonuclease pancreatic</fullName>
        <ecNumber>4.6.1.18</ecNumber>
    </recommendedName>
    <alternativeName>
        <fullName>RNase 1</fullName>
    </alternativeName>
    <alternativeName>
        <fullName>RNase A</fullName>
    </alternativeName>
</protein>
<sequence>MGLEKSFILFSLLVLVLGWVQPSLGKESSAQKFNRQHMDTEGSSNSSPTYCNQMMTPRGMTKGSCKPVNTFVHETLADVQAICSQGQVTCKNGKSNCYKSSCALHITDCRLKGNSKYPNCDYKTSDYQKHIIIACEGNPSVPVHFDASE</sequence>
<comment type="function">
    <text evidence="1">Endonuclease that catalyzes the cleavage of RNA on the 3' side of pyrimidine nucleotides. Acts on single-stranded and double-stranded RNA (By similarity).</text>
</comment>
<comment type="catalytic activity">
    <reaction>
        <text>an [RNA] containing cytidine + H2O = an [RNA]-3'-cytidine-3'-phosphate + a 5'-hydroxy-ribonucleotide-3'-[RNA].</text>
        <dbReference type="EC" id="4.6.1.18"/>
    </reaction>
</comment>
<comment type="catalytic activity">
    <reaction>
        <text>an [RNA] containing uridine + H2O = an [RNA]-3'-uridine-3'-phosphate + a 5'-hydroxy-ribonucleotide-3'-[RNA].</text>
        <dbReference type="EC" id="4.6.1.18"/>
    </reaction>
</comment>
<comment type="subunit">
    <text evidence="1">Monomer. Interacts with and forms tight 1:1 complexes with RNH1. Dimerization of two such complexes may occur. Interaction with RNH1 inhibits this protein (By similarity).</text>
</comment>
<comment type="subcellular location">
    <subcellularLocation>
        <location>Secreted</location>
    </subcellularLocation>
</comment>
<comment type="tissue specificity">
    <text>Pancreas.</text>
</comment>
<comment type="similarity">
    <text evidence="3">Belongs to the pancreatic ribonuclease family.</text>
</comment>
<organism>
    <name type="scientific">Leopoldamys edwardsi</name>
    <name type="common">Edwards's long-tailed giant rat</name>
    <dbReference type="NCBI Taxonomy" id="83756"/>
    <lineage>
        <taxon>Eukaryota</taxon>
        <taxon>Metazoa</taxon>
        <taxon>Chordata</taxon>
        <taxon>Craniata</taxon>
        <taxon>Vertebrata</taxon>
        <taxon>Euteleostomi</taxon>
        <taxon>Mammalia</taxon>
        <taxon>Eutheria</taxon>
        <taxon>Euarchontoglires</taxon>
        <taxon>Glires</taxon>
        <taxon>Rodentia</taxon>
        <taxon>Myomorpha</taxon>
        <taxon>Muroidea</taxon>
        <taxon>Muridae</taxon>
        <taxon>Murinae</taxon>
        <taxon>Leopoldamys</taxon>
    </lineage>
</organism>
<feature type="signal peptide" evidence="2">
    <location>
        <begin position="1"/>
        <end position="25"/>
    </location>
</feature>
<feature type="chain" id="PRO_0000030925" description="Ribonuclease pancreatic">
    <location>
        <begin position="26"/>
        <end position="149"/>
    </location>
</feature>
<feature type="active site" description="Proton acceptor" evidence="1">
    <location>
        <position position="37"/>
    </location>
</feature>
<feature type="active site" description="Proton donor" evidence="1">
    <location>
        <position position="144"/>
    </location>
</feature>
<feature type="binding site" evidence="1">
    <location>
        <position position="32"/>
    </location>
    <ligand>
        <name>substrate</name>
    </ligand>
</feature>
<feature type="binding site" evidence="1">
    <location>
        <position position="35"/>
    </location>
    <ligand>
        <name>substrate</name>
    </ligand>
</feature>
<feature type="binding site" evidence="1">
    <location>
        <begin position="66"/>
        <end position="70"/>
    </location>
    <ligand>
        <name>substrate</name>
    </ligand>
</feature>
<feature type="binding site" evidence="1">
    <location>
        <position position="91"/>
    </location>
    <ligand>
        <name>substrate</name>
    </ligand>
</feature>
<feature type="binding site" evidence="1">
    <location>
        <position position="110"/>
    </location>
    <ligand>
        <name>substrate</name>
    </ligand>
</feature>
<feature type="disulfide bond" evidence="1">
    <location>
        <begin position="51"/>
        <end position="109"/>
    </location>
</feature>
<feature type="disulfide bond" evidence="1">
    <location>
        <begin position="65"/>
        <end position="120"/>
    </location>
</feature>
<feature type="disulfide bond" evidence="1">
    <location>
        <begin position="83"/>
        <end position="135"/>
    </location>
</feature>
<feature type="disulfide bond" evidence="1">
    <location>
        <begin position="90"/>
        <end position="97"/>
    </location>
</feature>
<dbReference type="EC" id="4.6.1.18"/>
<dbReference type="EMBL" id="AJ005777">
    <property type="protein sequence ID" value="CAB41480.1"/>
    <property type="molecule type" value="Genomic_DNA"/>
</dbReference>
<dbReference type="SMR" id="Q9WUS3"/>
<dbReference type="GO" id="GO:0005576">
    <property type="term" value="C:extracellular region"/>
    <property type="evidence" value="ECO:0007669"/>
    <property type="project" value="UniProtKB-SubCell"/>
</dbReference>
<dbReference type="GO" id="GO:0016829">
    <property type="term" value="F:lyase activity"/>
    <property type="evidence" value="ECO:0007669"/>
    <property type="project" value="UniProtKB-KW"/>
</dbReference>
<dbReference type="GO" id="GO:0003676">
    <property type="term" value="F:nucleic acid binding"/>
    <property type="evidence" value="ECO:0007669"/>
    <property type="project" value="InterPro"/>
</dbReference>
<dbReference type="GO" id="GO:0004522">
    <property type="term" value="F:ribonuclease A activity"/>
    <property type="evidence" value="ECO:0007669"/>
    <property type="project" value="UniProtKB-EC"/>
</dbReference>
<dbReference type="GO" id="GO:0050830">
    <property type="term" value="P:defense response to Gram-positive bacterium"/>
    <property type="evidence" value="ECO:0007669"/>
    <property type="project" value="TreeGrafter"/>
</dbReference>
<dbReference type="CDD" id="cd06265">
    <property type="entry name" value="RNase_A_canonical"/>
    <property type="match status" value="1"/>
</dbReference>
<dbReference type="FunFam" id="3.10.130.10:FF:000001">
    <property type="entry name" value="Ribonuclease pancreatic"/>
    <property type="match status" value="1"/>
</dbReference>
<dbReference type="Gene3D" id="3.10.130.10">
    <property type="entry name" value="Ribonuclease A-like domain"/>
    <property type="match status" value="1"/>
</dbReference>
<dbReference type="InterPro" id="IPR001427">
    <property type="entry name" value="RNaseA"/>
</dbReference>
<dbReference type="InterPro" id="IPR036816">
    <property type="entry name" value="RNaseA-like_dom_sf"/>
</dbReference>
<dbReference type="InterPro" id="IPR023411">
    <property type="entry name" value="RNaseA_AS"/>
</dbReference>
<dbReference type="InterPro" id="IPR023412">
    <property type="entry name" value="RNaseA_domain"/>
</dbReference>
<dbReference type="PANTHER" id="PTHR11437">
    <property type="entry name" value="RIBONUCLEASE"/>
    <property type="match status" value="1"/>
</dbReference>
<dbReference type="PANTHER" id="PTHR11437:SF24">
    <property type="entry name" value="RIBONUCLEASE PANCREATIC"/>
    <property type="match status" value="1"/>
</dbReference>
<dbReference type="Pfam" id="PF00074">
    <property type="entry name" value="RnaseA"/>
    <property type="match status" value="1"/>
</dbReference>
<dbReference type="PRINTS" id="PR00794">
    <property type="entry name" value="RIBONUCLEASE"/>
</dbReference>
<dbReference type="SMART" id="SM00092">
    <property type="entry name" value="RNAse_Pc"/>
    <property type="match status" value="1"/>
</dbReference>
<dbReference type="SUPFAM" id="SSF54076">
    <property type="entry name" value="RNase A-like"/>
    <property type="match status" value="1"/>
</dbReference>
<dbReference type="PROSITE" id="PS00127">
    <property type="entry name" value="RNASE_PANCREATIC"/>
    <property type="match status" value="1"/>
</dbReference>
<keyword id="KW-1015">Disulfide bond</keyword>
<keyword id="KW-0255">Endonuclease</keyword>
<keyword id="KW-0378">Hydrolase</keyword>
<keyword id="KW-0456">Lyase</keyword>
<keyword id="KW-0540">Nuclease</keyword>
<keyword id="KW-0964">Secreted</keyword>
<keyword id="KW-0732">Signal</keyword>
<gene>
    <name type="primary">RNASE1</name>
</gene>
<reference key="1">
    <citation type="journal article" date="1999" name="Mol. Phylogenet. Evol.">
        <title>The phylogenetic position of 'Acomyinae' (Rodentia, Mammalia) as sister group of a Murinae + Gerbillinae clade: evidence from the nuclear ribonuclease gene.</title>
        <authorList>
            <person name="Dubois J.-Y.F."/>
            <person name="Catzeflis F.M."/>
            <person name="Beintema J.J."/>
        </authorList>
    </citation>
    <scope>NUCLEOTIDE SEQUENCE [GENOMIC DNA]</scope>
</reference>
<accession>Q9WUS3</accession>